<name>PGK_HISS2</name>
<gene>
    <name evidence="1" type="primary">pgk</name>
    <name type="ordered locus">HSM_0075</name>
</gene>
<reference key="1">
    <citation type="submission" date="2008-02" db="EMBL/GenBank/DDBJ databases">
        <title>Complete sequence of Haemophilus somnus 2336.</title>
        <authorList>
            <consortium name="US DOE Joint Genome Institute"/>
            <person name="Siddaramappa S."/>
            <person name="Duncan A.J."/>
            <person name="Challacombe J.F."/>
            <person name="Rainey D."/>
            <person name="Gillaspy A.F."/>
            <person name="Carson M."/>
            <person name="Gipson J."/>
            <person name="Gipson M."/>
            <person name="Bruce D."/>
            <person name="Detter J.C."/>
            <person name="Han C.S."/>
            <person name="Land M."/>
            <person name="Tapia R."/>
            <person name="Thompson L.S."/>
            <person name="Orvis J."/>
            <person name="Zaitshik J."/>
            <person name="Barnes G."/>
            <person name="Brettin T.S."/>
            <person name="Dyer D.W."/>
            <person name="Inzana T.J."/>
        </authorList>
    </citation>
    <scope>NUCLEOTIDE SEQUENCE [LARGE SCALE GENOMIC DNA]</scope>
    <source>
        <strain>2336</strain>
    </source>
</reference>
<sequence>MSVIKMTDLDLAGKRVFIRADLNVPVKEGKVTSDARIKATIPTLKLALEKGAKVMVTSHLGRPTEGEFKPEDSLQPVVDYLKGAGFNVRLAQDYLNGVEVNEGEIVVLENVRVNKGEKKNDPELSKKYAALCDVFVMDAFGTAHRAQASTYGVAEFAPVACAGPLLAAELEALGKALKEPQRPMLAIVGGSKVSTKLTVLDSLSKIADQLIVGGGIANTFIAAEGHNVGKSLYEADLIPEAQRLSKVTNIPVPVDVRVGTEFSETALSTEKSVADVSGEESIFDIGDKSAEQLADIIRNAKTILWNGPVGVFEFPNFRKGTEIVSNAIAEATANGAFSIAGGGDTLAAIDLFGIKDKISYISTGGGAFLEFVEGKVLPAVEILEKRANG</sequence>
<comment type="catalytic activity">
    <reaction evidence="1">
        <text>(2R)-3-phosphoglycerate + ATP = (2R)-3-phospho-glyceroyl phosphate + ADP</text>
        <dbReference type="Rhea" id="RHEA:14801"/>
        <dbReference type="ChEBI" id="CHEBI:30616"/>
        <dbReference type="ChEBI" id="CHEBI:57604"/>
        <dbReference type="ChEBI" id="CHEBI:58272"/>
        <dbReference type="ChEBI" id="CHEBI:456216"/>
        <dbReference type="EC" id="2.7.2.3"/>
    </reaction>
</comment>
<comment type="pathway">
    <text evidence="1">Carbohydrate degradation; glycolysis; pyruvate from D-glyceraldehyde 3-phosphate: step 2/5.</text>
</comment>
<comment type="subunit">
    <text evidence="1">Monomer.</text>
</comment>
<comment type="subcellular location">
    <subcellularLocation>
        <location evidence="1">Cytoplasm</location>
    </subcellularLocation>
</comment>
<comment type="similarity">
    <text evidence="1">Belongs to the phosphoglycerate kinase family.</text>
</comment>
<evidence type="ECO:0000255" key="1">
    <source>
        <dbReference type="HAMAP-Rule" id="MF_00145"/>
    </source>
</evidence>
<accession>B0UV33</accession>
<protein>
    <recommendedName>
        <fullName evidence="1">Phosphoglycerate kinase</fullName>
        <ecNumber evidence="1">2.7.2.3</ecNumber>
    </recommendedName>
</protein>
<proteinExistence type="inferred from homology"/>
<dbReference type="EC" id="2.7.2.3" evidence="1"/>
<dbReference type="EMBL" id="CP000947">
    <property type="protein sequence ID" value="ACA32418.1"/>
    <property type="molecule type" value="Genomic_DNA"/>
</dbReference>
<dbReference type="RefSeq" id="WP_012341575.1">
    <property type="nucleotide sequence ID" value="NC_010519.1"/>
</dbReference>
<dbReference type="SMR" id="B0UV33"/>
<dbReference type="STRING" id="228400.HSM_0075"/>
<dbReference type="GeneID" id="31486353"/>
<dbReference type="KEGG" id="hsm:HSM_0075"/>
<dbReference type="HOGENOM" id="CLU_025427_0_2_6"/>
<dbReference type="UniPathway" id="UPA00109">
    <property type="reaction ID" value="UER00185"/>
</dbReference>
<dbReference type="GO" id="GO:0005829">
    <property type="term" value="C:cytosol"/>
    <property type="evidence" value="ECO:0007669"/>
    <property type="project" value="TreeGrafter"/>
</dbReference>
<dbReference type="GO" id="GO:0043531">
    <property type="term" value="F:ADP binding"/>
    <property type="evidence" value="ECO:0007669"/>
    <property type="project" value="TreeGrafter"/>
</dbReference>
<dbReference type="GO" id="GO:0005524">
    <property type="term" value="F:ATP binding"/>
    <property type="evidence" value="ECO:0007669"/>
    <property type="project" value="UniProtKB-KW"/>
</dbReference>
<dbReference type="GO" id="GO:0004618">
    <property type="term" value="F:phosphoglycerate kinase activity"/>
    <property type="evidence" value="ECO:0007669"/>
    <property type="project" value="UniProtKB-UniRule"/>
</dbReference>
<dbReference type="GO" id="GO:0006094">
    <property type="term" value="P:gluconeogenesis"/>
    <property type="evidence" value="ECO:0007669"/>
    <property type="project" value="TreeGrafter"/>
</dbReference>
<dbReference type="GO" id="GO:0006096">
    <property type="term" value="P:glycolytic process"/>
    <property type="evidence" value="ECO:0007669"/>
    <property type="project" value="UniProtKB-UniRule"/>
</dbReference>
<dbReference type="FunFam" id="3.40.50.1260:FF:000001">
    <property type="entry name" value="Phosphoglycerate kinase"/>
    <property type="match status" value="1"/>
</dbReference>
<dbReference type="FunFam" id="3.40.50.1260:FF:000002">
    <property type="entry name" value="Phosphoglycerate kinase"/>
    <property type="match status" value="1"/>
</dbReference>
<dbReference type="Gene3D" id="3.40.50.1260">
    <property type="entry name" value="Phosphoglycerate kinase, N-terminal domain"/>
    <property type="match status" value="2"/>
</dbReference>
<dbReference type="HAMAP" id="MF_00145">
    <property type="entry name" value="Phosphoglyc_kinase"/>
    <property type="match status" value="1"/>
</dbReference>
<dbReference type="InterPro" id="IPR001576">
    <property type="entry name" value="Phosphoglycerate_kinase"/>
</dbReference>
<dbReference type="InterPro" id="IPR015911">
    <property type="entry name" value="Phosphoglycerate_kinase_CS"/>
</dbReference>
<dbReference type="InterPro" id="IPR015824">
    <property type="entry name" value="Phosphoglycerate_kinase_N"/>
</dbReference>
<dbReference type="InterPro" id="IPR036043">
    <property type="entry name" value="Phosphoglycerate_kinase_sf"/>
</dbReference>
<dbReference type="PANTHER" id="PTHR11406">
    <property type="entry name" value="PHOSPHOGLYCERATE KINASE"/>
    <property type="match status" value="1"/>
</dbReference>
<dbReference type="PANTHER" id="PTHR11406:SF23">
    <property type="entry name" value="PHOSPHOGLYCERATE KINASE 1, CHLOROPLASTIC-RELATED"/>
    <property type="match status" value="1"/>
</dbReference>
<dbReference type="Pfam" id="PF00162">
    <property type="entry name" value="PGK"/>
    <property type="match status" value="1"/>
</dbReference>
<dbReference type="PIRSF" id="PIRSF000724">
    <property type="entry name" value="Pgk"/>
    <property type="match status" value="1"/>
</dbReference>
<dbReference type="PRINTS" id="PR00477">
    <property type="entry name" value="PHGLYCKINASE"/>
</dbReference>
<dbReference type="SUPFAM" id="SSF53748">
    <property type="entry name" value="Phosphoglycerate kinase"/>
    <property type="match status" value="1"/>
</dbReference>
<dbReference type="PROSITE" id="PS00111">
    <property type="entry name" value="PGLYCERATE_KINASE"/>
    <property type="match status" value="1"/>
</dbReference>
<feature type="chain" id="PRO_1000076590" description="Phosphoglycerate kinase">
    <location>
        <begin position="1"/>
        <end position="389"/>
    </location>
</feature>
<feature type="binding site" evidence="1">
    <location>
        <begin position="21"/>
        <end position="23"/>
    </location>
    <ligand>
        <name>substrate</name>
    </ligand>
</feature>
<feature type="binding site" evidence="1">
    <location>
        <position position="36"/>
    </location>
    <ligand>
        <name>substrate</name>
    </ligand>
</feature>
<feature type="binding site" evidence="1">
    <location>
        <begin position="59"/>
        <end position="62"/>
    </location>
    <ligand>
        <name>substrate</name>
    </ligand>
</feature>
<feature type="binding site" evidence="1">
    <location>
        <position position="112"/>
    </location>
    <ligand>
        <name>substrate</name>
    </ligand>
</feature>
<feature type="binding site" evidence="1">
    <location>
        <position position="145"/>
    </location>
    <ligand>
        <name>substrate</name>
    </ligand>
</feature>
<feature type="binding site" evidence="1">
    <location>
        <position position="196"/>
    </location>
    <ligand>
        <name>ATP</name>
        <dbReference type="ChEBI" id="CHEBI:30616"/>
    </ligand>
</feature>
<feature type="binding site" evidence="1">
    <location>
        <position position="313"/>
    </location>
    <ligand>
        <name>ATP</name>
        <dbReference type="ChEBI" id="CHEBI:30616"/>
    </ligand>
</feature>
<feature type="binding site" evidence="1">
    <location>
        <begin position="342"/>
        <end position="345"/>
    </location>
    <ligand>
        <name>ATP</name>
        <dbReference type="ChEBI" id="CHEBI:30616"/>
    </ligand>
</feature>
<organism>
    <name type="scientific">Histophilus somni (strain 2336)</name>
    <name type="common">Haemophilus somnus</name>
    <dbReference type="NCBI Taxonomy" id="228400"/>
    <lineage>
        <taxon>Bacteria</taxon>
        <taxon>Pseudomonadati</taxon>
        <taxon>Pseudomonadota</taxon>
        <taxon>Gammaproteobacteria</taxon>
        <taxon>Pasteurellales</taxon>
        <taxon>Pasteurellaceae</taxon>
        <taxon>Histophilus</taxon>
    </lineage>
</organism>
<keyword id="KW-0067">ATP-binding</keyword>
<keyword id="KW-0963">Cytoplasm</keyword>
<keyword id="KW-0324">Glycolysis</keyword>
<keyword id="KW-0418">Kinase</keyword>
<keyword id="KW-0547">Nucleotide-binding</keyword>
<keyword id="KW-0808">Transferase</keyword>